<comment type="similarity">
    <text evidence="1">Belongs to the IIV-6 436R family.</text>
</comment>
<name>VF436_IIV6</name>
<protein>
    <recommendedName>
        <fullName>Uncharacterized protein 436R</fullName>
    </recommendedName>
</protein>
<sequence length="305" mass="34686">MSLEKDEEVVIFEAYLAGSANIFKNLIELLSQVAPIKKSDNSNKSIKQAFFKITKNGIYINIDHQSDILINISLDADKFGSYKYNFSLPELHIGITLDIIKDALKNVKKSEGVALCIRKKTFQTMPNEMSFSISSMDNNNASRGFVVKFNIVQNININAMLDGQELIEMRSNQFLGLCKDMGGSKKQIKVIVHNDSVVFSCNMVDIATKWLSFPIEEEVFQSSIHEKLYFLNHFKSEHIKTITKLATFDDTIKMSCVDDSIVFKSYITRCTPTKARHLPTEYIGKINIWVKAEPKKEISDDEDDL</sequence>
<feature type="chain" id="PRO_0000377890" description="Uncharacterized protein 436R">
    <location>
        <begin position="1"/>
        <end position="305"/>
    </location>
</feature>
<organismHost>
    <name type="scientific">Acheta domesticus</name>
    <name type="common">House cricket</name>
    <dbReference type="NCBI Taxonomy" id="6997"/>
</organismHost>
<organismHost>
    <name type="scientific">Chilo suppressalis</name>
    <name type="common">Asiatic rice borer moth</name>
    <dbReference type="NCBI Taxonomy" id="168631"/>
</organismHost>
<organismHost>
    <name type="scientific">Gryllus bimaculatus</name>
    <name type="common">Two-spotted cricket</name>
    <dbReference type="NCBI Taxonomy" id="6999"/>
</organismHost>
<organismHost>
    <name type="scientific">Gryllus campestris</name>
    <dbReference type="NCBI Taxonomy" id="58607"/>
</organismHost>
<organismHost>
    <name type="scientific">Spodoptera frugiperda</name>
    <name type="common">Fall armyworm</name>
    <dbReference type="NCBI Taxonomy" id="7108"/>
</organismHost>
<proteinExistence type="inferred from homology"/>
<reference key="1">
    <citation type="journal article" date="2001" name="Virology">
        <title>Analysis of the first complete DNA sequence of an invertebrate iridovirus: coding strategy of the genome of Chilo iridescent virus.</title>
        <authorList>
            <person name="Jakob N.J."/>
            <person name="Mueller K."/>
            <person name="Bahr U."/>
            <person name="Darai G."/>
        </authorList>
    </citation>
    <scope>NUCLEOTIDE SEQUENCE [LARGE SCALE GENOMIC DNA]</scope>
</reference>
<reference key="2">
    <citation type="journal article" date="2007" name="Virol. J.">
        <title>Comparative genomic analysis of the family Iridoviridae: re-annotating and defining the core set of iridovirus genes.</title>
        <authorList>
            <person name="Eaton H.E."/>
            <person name="Metcalf J."/>
            <person name="Penny E."/>
            <person name="Tcherepanov V."/>
            <person name="Upton C."/>
            <person name="Brunetti C.R."/>
        </authorList>
    </citation>
    <scope>GENOME REANNOTATION</scope>
</reference>
<gene>
    <name type="ORF">IIV6-436R</name>
</gene>
<keyword id="KW-1185">Reference proteome</keyword>
<organism>
    <name type="scientific">Invertebrate iridescent virus 6</name>
    <name type="common">IIV-6</name>
    <name type="synonym">Chilo iridescent virus</name>
    <dbReference type="NCBI Taxonomy" id="176652"/>
    <lineage>
        <taxon>Viruses</taxon>
        <taxon>Varidnaviria</taxon>
        <taxon>Bamfordvirae</taxon>
        <taxon>Nucleocytoviricota</taxon>
        <taxon>Megaviricetes</taxon>
        <taxon>Pimascovirales</taxon>
        <taxon>Iridoviridae</taxon>
        <taxon>Betairidovirinae</taxon>
        <taxon>Iridovirus</taxon>
    </lineage>
</organism>
<accession>Q91F89</accession>
<evidence type="ECO:0000305" key="1"/>
<dbReference type="EMBL" id="AF303741">
    <property type="protein sequence ID" value="AAK82296.1"/>
    <property type="molecule type" value="Genomic_DNA"/>
</dbReference>
<dbReference type="RefSeq" id="NP_149899.1">
    <property type="nucleotide sequence ID" value="NC_003038.1"/>
</dbReference>
<dbReference type="SMR" id="Q91F89"/>
<dbReference type="KEGG" id="vg:1733175"/>
<dbReference type="OrthoDB" id="31345at10239"/>
<dbReference type="Proteomes" id="UP000001359">
    <property type="component" value="Genome"/>
</dbReference>
<dbReference type="Gene3D" id="3.70.10.10">
    <property type="match status" value="1"/>
</dbReference>
<dbReference type="InterPro" id="IPR046938">
    <property type="entry name" value="DNA_clamp_sf"/>
</dbReference>
<dbReference type="SUPFAM" id="SSF55979">
    <property type="entry name" value="DNA clamp"/>
    <property type="match status" value="1"/>
</dbReference>